<dbReference type="EC" id="5.3.1.9" evidence="1"/>
<dbReference type="EMBL" id="CP000964">
    <property type="protein sequence ID" value="ACI10999.1"/>
    <property type="molecule type" value="Genomic_DNA"/>
</dbReference>
<dbReference type="SMR" id="B5XY03"/>
<dbReference type="KEGG" id="kpe:KPK_5259"/>
<dbReference type="HOGENOM" id="CLU_017947_3_1_6"/>
<dbReference type="UniPathway" id="UPA00109">
    <property type="reaction ID" value="UER00181"/>
</dbReference>
<dbReference type="UniPathway" id="UPA00138"/>
<dbReference type="Proteomes" id="UP000001734">
    <property type="component" value="Chromosome"/>
</dbReference>
<dbReference type="GO" id="GO:0005829">
    <property type="term" value="C:cytosol"/>
    <property type="evidence" value="ECO:0007669"/>
    <property type="project" value="TreeGrafter"/>
</dbReference>
<dbReference type="GO" id="GO:0097367">
    <property type="term" value="F:carbohydrate derivative binding"/>
    <property type="evidence" value="ECO:0007669"/>
    <property type="project" value="InterPro"/>
</dbReference>
<dbReference type="GO" id="GO:0004347">
    <property type="term" value="F:glucose-6-phosphate isomerase activity"/>
    <property type="evidence" value="ECO:0007669"/>
    <property type="project" value="UniProtKB-UniRule"/>
</dbReference>
<dbReference type="GO" id="GO:0048029">
    <property type="term" value="F:monosaccharide binding"/>
    <property type="evidence" value="ECO:0007669"/>
    <property type="project" value="TreeGrafter"/>
</dbReference>
<dbReference type="GO" id="GO:0006094">
    <property type="term" value="P:gluconeogenesis"/>
    <property type="evidence" value="ECO:0007669"/>
    <property type="project" value="UniProtKB-UniRule"/>
</dbReference>
<dbReference type="GO" id="GO:0051156">
    <property type="term" value="P:glucose 6-phosphate metabolic process"/>
    <property type="evidence" value="ECO:0007669"/>
    <property type="project" value="TreeGrafter"/>
</dbReference>
<dbReference type="GO" id="GO:0006096">
    <property type="term" value="P:glycolytic process"/>
    <property type="evidence" value="ECO:0007669"/>
    <property type="project" value="UniProtKB-UniRule"/>
</dbReference>
<dbReference type="CDD" id="cd05015">
    <property type="entry name" value="SIS_PGI_1"/>
    <property type="match status" value="1"/>
</dbReference>
<dbReference type="CDD" id="cd05016">
    <property type="entry name" value="SIS_PGI_2"/>
    <property type="match status" value="1"/>
</dbReference>
<dbReference type="FunFam" id="1.10.1390.10:FF:000001">
    <property type="entry name" value="Glucose-6-phosphate isomerase"/>
    <property type="match status" value="1"/>
</dbReference>
<dbReference type="FunFam" id="3.40.50.10490:FF:000004">
    <property type="entry name" value="Glucose-6-phosphate isomerase"/>
    <property type="match status" value="1"/>
</dbReference>
<dbReference type="Gene3D" id="1.10.1390.10">
    <property type="match status" value="1"/>
</dbReference>
<dbReference type="Gene3D" id="3.40.50.10490">
    <property type="entry name" value="Glucose-6-phosphate isomerase like protein, domain 1"/>
    <property type="match status" value="2"/>
</dbReference>
<dbReference type="HAMAP" id="MF_00473">
    <property type="entry name" value="G6P_isomerase"/>
    <property type="match status" value="1"/>
</dbReference>
<dbReference type="InterPro" id="IPR001672">
    <property type="entry name" value="G6P_Isomerase"/>
</dbReference>
<dbReference type="InterPro" id="IPR023096">
    <property type="entry name" value="G6P_Isomerase_C"/>
</dbReference>
<dbReference type="InterPro" id="IPR018189">
    <property type="entry name" value="Phosphoglucose_isomerase_CS"/>
</dbReference>
<dbReference type="InterPro" id="IPR046348">
    <property type="entry name" value="SIS_dom_sf"/>
</dbReference>
<dbReference type="InterPro" id="IPR035476">
    <property type="entry name" value="SIS_PGI_1"/>
</dbReference>
<dbReference type="InterPro" id="IPR035482">
    <property type="entry name" value="SIS_PGI_2"/>
</dbReference>
<dbReference type="NCBIfam" id="NF001211">
    <property type="entry name" value="PRK00179.1"/>
    <property type="match status" value="1"/>
</dbReference>
<dbReference type="PANTHER" id="PTHR11469">
    <property type="entry name" value="GLUCOSE-6-PHOSPHATE ISOMERASE"/>
    <property type="match status" value="1"/>
</dbReference>
<dbReference type="PANTHER" id="PTHR11469:SF1">
    <property type="entry name" value="GLUCOSE-6-PHOSPHATE ISOMERASE"/>
    <property type="match status" value="1"/>
</dbReference>
<dbReference type="Pfam" id="PF00342">
    <property type="entry name" value="PGI"/>
    <property type="match status" value="1"/>
</dbReference>
<dbReference type="PRINTS" id="PR00662">
    <property type="entry name" value="G6PISOMERASE"/>
</dbReference>
<dbReference type="SUPFAM" id="SSF53697">
    <property type="entry name" value="SIS domain"/>
    <property type="match status" value="1"/>
</dbReference>
<dbReference type="PROSITE" id="PS00765">
    <property type="entry name" value="P_GLUCOSE_ISOMERASE_1"/>
    <property type="match status" value="1"/>
</dbReference>
<dbReference type="PROSITE" id="PS00174">
    <property type="entry name" value="P_GLUCOSE_ISOMERASE_2"/>
    <property type="match status" value="1"/>
</dbReference>
<dbReference type="PROSITE" id="PS51463">
    <property type="entry name" value="P_GLUCOSE_ISOMERASE_3"/>
    <property type="match status" value="1"/>
</dbReference>
<gene>
    <name evidence="1" type="primary">pgi</name>
    <name type="ordered locus">KPK_5259</name>
</gene>
<keyword id="KW-0963">Cytoplasm</keyword>
<keyword id="KW-0312">Gluconeogenesis</keyword>
<keyword id="KW-0324">Glycolysis</keyword>
<keyword id="KW-0413">Isomerase</keyword>
<accession>B5XY03</accession>
<organism>
    <name type="scientific">Klebsiella pneumoniae (strain 342)</name>
    <dbReference type="NCBI Taxonomy" id="507522"/>
    <lineage>
        <taxon>Bacteria</taxon>
        <taxon>Pseudomonadati</taxon>
        <taxon>Pseudomonadota</taxon>
        <taxon>Gammaproteobacteria</taxon>
        <taxon>Enterobacterales</taxon>
        <taxon>Enterobacteriaceae</taxon>
        <taxon>Klebsiella/Raoultella group</taxon>
        <taxon>Klebsiella</taxon>
        <taxon>Klebsiella pneumoniae complex</taxon>
    </lineage>
</organism>
<proteinExistence type="inferred from homology"/>
<evidence type="ECO:0000255" key="1">
    <source>
        <dbReference type="HAMAP-Rule" id="MF_00473"/>
    </source>
</evidence>
<protein>
    <recommendedName>
        <fullName evidence="1">Glucose-6-phosphate isomerase</fullName>
        <shortName evidence="1">GPI</shortName>
        <ecNumber evidence="1">5.3.1.9</ecNumber>
    </recommendedName>
    <alternativeName>
        <fullName evidence="1">Phosphoglucose isomerase</fullName>
        <shortName evidence="1">PGI</shortName>
    </alternativeName>
    <alternativeName>
        <fullName evidence="1">Phosphohexose isomerase</fullName>
        <shortName evidence="1">PHI</shortName>
    </alternativeName>
</protein>
<reference key="1">
    <citation type="journal article" date="2008" name="PLoS Genet.">
        <title>Complete genome sequence of the N2-fixing broad host range endophyte Klebsiella pneumoniae 342 and virulence predictions verified in mice.</title>
        <authorList>
            <person name="Fouts D.E."/>
            <person name="Tyler H.L."/>
            <person name="DeBoy R.T."/>
            <person name="Daugherty S."/>
            <person name="Ren Q."/>
            <person name="Badger J.H."/>
            <person name="Durkin A.S."/>
            <person name="Huot H."/>
            <person name="Shrivastava S."/>
            <person name="Kothari S."/>
            <person name="Dodson R.J."/>
            <person name="Mohamoud Y."/>
            <person name="Khouri H."/>
            <person name="Roesch L.F.W."/>
            <person name="Krogfelt K.A."/>
            <person name="Struve C."/>
            <person name="Triplett E.W."/>
            <person name="Methe B.A."/>
        </authorList>
    </citation>
    <scope>NUCLEOTIDE SEQUENCE [LARGE SCALE GENOMIC DNA]</scope>
    <source>
        <strain>342</strain>
    </source>
</reference>
<feature type="chain" id="PRO_1000125733" description="Glucose-6-phosphate isomerase">
    <location>
        <begin position="1"/>
        <end position="549"/>
    </location>
</feature>
<feature type="active site" description="Proton donor" evidence="1">
    <location>
        <position position="355"/>
    </location>
</feature>
<feature type="active site" evidence="1">
    <location>
        <position position="386"/>
    </location>
</feature>
<feature type="active site" evidence="1">
    <location>
        <position position="514"/>
    </location>
</feature>
<sequence>MKNINPTQTSAWQALQKHFDEMKDVTISELFAKDSDRFSKFSATFDDLMLVDFSKNRITEETLAKLQDLAKETDLAGAIKSMFSGEKINRTEDRAVLHVALRNRSNTPIVVDGKDVMPEVNAVLEKMKTFSEAIISGSWKGYTGKPITDVVNIGIGGSDLGPFMVTEALRPYKNHLNMHFVSNVDGTHIAEVLKNVNPETTLFLVASKTFTTQETMTNAHSARDWFLATAGDDKHVAKHFAALSTNAKAVGEFGIDTANMFEFWDWVGGRYSLWSAIGLSIILSVGFDNFVELLSGAHAMDKHFSTTPAEKNLPVLLALIGIWYNNFFGAETEAILPYDQYMHRFAAYFQQGNMESNGKYVDRNGHAVDYQTGPIIWGEPGTNGQHAFYQLIHQGTKMVPCDFIAPAITHNPLSDHHPKLLSNFFAQTEALAFGKSREVVEQEYRDQGKDPATLEHVVPFKVFEGNRPTNSILLREITPFSLGALIALYEHKIFTQGAILNIFTFDQWGVELGKQLANRILPELKDGSEVSSHDSSTNGLINRYKAWRA</sequence>
<comment type="function">
    <text evidence="1">Catalyzes the reversible isomerization of glucose-6-phosphate to fructose-6-phosphate.</text>
</comment>
<comment type="catalytic activity">
    <reaction evidence="1">
        <text>alpha-D-glucose 6-phosphate = beta-D-fructose 6-phosphate</text>
        <dbReference type="Rhea" id="RHEA:11816"/>
        <dbReference type="ChEBI" id="CHEBI:57634"/>
        <dbReference type="ChEBI" id="CHEBI:58225"/>
        <dbReference type="EC" id="5.3.1.9"/>
    </reaction>
</comment>
<comment type="pathway">
    <text evidence="1">Carbohydrate biosynthesis; gluconeogenesis.</text>
</comment>
<comment type="pathway">
    <text evidence="1">Carbohydrate degradation; glycolysis; D-glyceraldehyde 3-phosphate and glycerone phosphate from D-glucose: step 2/4.</text>
</comment>
<comment type="subcellular location">
    <subcellularLocation>
        <location evidence="1">Cytoplasm</location>
    </subcellularLocation>
</comment>
<comment type="similarity">
    <text evidence="1">Belongs to the GPI family.</text>
</comment>
<name>G6PI_KLEP3</name>